<name>PUR6_HUMAN</name>
<organism>
    <name type="scientific">Homo sapiens</name>
    <name type="common">Human</name>
    <dbReference type="NCBI Taxonomy" id="9606"/>
    <lineage>
        <taxon>Eukaryota</taxon>
        <taxon>Metazoa</taxon>
        <taxon>Chordata</taxon>
        <taxon>Craniata</taxon>
        <taxon>Vertebrata</taxon>
        <taxon>Euteleostomi</taxon>
        <taxon>Mammalia</taxon>
        <taxon>Eutheria</taxon>
        <taxon>Euarchontoglires</taxon>
        <taxon>Primates</taxon>
        <taxon>Haplorrhini</taxon>
        <taxon>Catarrhini</taxon>
        <taxon>Hominidae</taxon>
        <taxon>Homo</taxon>
    </lineage>
</organism>
<sequence>MATAEVLNIGKKLYEGKTKEVYELLDSPGKVLLQSKDQITAGNAARKNHLEGKAAISNKITSCIFQLLQEAGIKTAFTRKCGETAFIAPQCEMIPIEWVCRRIATGSFLKRNPGVKEGYKFYPPKVELFFKDDANNDPQWSEEQLIAAKFCFAGLLIGQTEVDIMSHATQAIFEILEKSWLPQNCTLVDMKIEFGVDVTTKEIVLADVIDNDSWRLWPSGDRSQQKDKQSYRDLKEVTPEGLQMVKKNFEWVAERVELLLKSESQCRVVVLMGSTSDLGHCEKIKKACGNFGIPCELRVTSAHKGPDETLRIKAEYEGDGIPTVFVAVAGRSNGLGPVMSGNTAYPVISCPPLTPDWGVQDVWSSLRLPSGLGCSTVLSPEGSAQFAAQIFGLSNHLVWSKLRASILNTWISLKQADKKIRECNL</sequence>
<protein>
    <recommendedName>
        <fullName evidence="11 12">Bifunctional phosphoribosylaminoimidazole carboxylase/phosphoribosylaminoimidazole succinocarboxamide synthetase</fullName>
        <shortName evidence="6 9">PAICS</shortName>
    </recommendedName>
    <domain>
        <recommendedName>
            <fullName evidence="12">Phosphoribosylaminoimidazole carboxylase</fullName>
            <ecNumber evidence="2 4">4.1.1.21</ecNumber>
        </recommendedName>
        <alternativeName>
            <fullName evidence="6 9">AIR carboxylase</fullName>
            <shortName evidence="6 9">AIRC</shortName>
        </alternativeName>
    </domain>
    <domain>
        <recommendedName>
            <fullName evidence="12">Phosphoribosylaminoimidazole succinocarboxamide synthetase</fullName>
            <ecNumber evidence="4">6.3.2.6</ecNumber>
        </recommendedName>
        <alternativeName>
            <fullName evidence="6">SAICAR synthetase</fullName>
        </alternativeName>
    </domain>
</protein>
<gene>
    <name evidence="13" type="primary">PAICS</name>
    <name evidence="8" type="synonym">ADE2</name>
    <name type="synonym">AIRC</name>
    <name type="synonym">PAIS</name>
</gene>
<feature type="initiator methionine" description="Removed" evidence="5 20 25">
    <location>
        <position position="1"/>
    </location>
</feature>
<feature type="chain" id="PRO_0000075030" description="Bifunctional phosphoribosylaminoimidazole carboxylase/phosphoribosylaminoimidazole succinocarboxamide synthetase">
    <location>
        <begin position="2"/>
        <end position="425"/>
    </location>
</feature>
<feature type="region of interest" description="SAICAR synthetase domain" evidence="11 14">
    <location>
        <begin position="2"/>
        <end position="260"/>
    </location>
</feature>
<feature type="region of interest" description="Linker" evidence="11 14">
    <location>
        <begin position="261"/>
        <end position="266"/>
    </location>
</feature>
<feature type="region of interest" description="AIR carboxylase domain" evidence="2 14">
    <location>
        <begin position="267"/>
        <end position="425"/>
    </location>
</feature>
<feature type="binding site" evidence="2 14">
    <location>
        <position position="332"/>
    </location>
    <ligand>
        <name>CO2</name>
        <dbReference type="ChEBI" id="CHEBI:16526"/>
    </ligand>
</feature>
<feature type="modified residue" description="N-acetylalanine" evidence="5 20 25">
    <location>
        <position position="2"/>
    </location>
</feature>
<feature type="modified residue" description="Phosphotyrosine" evidence="1">
    <location>
        <position position="22"/>
    </location>
</feature>
<feature type="modified residue" description="Phosphoserine" evidence="15 16 17 18 19 22 23 24 26">
    <location>
        <position position="27"/>
    </location>
</feature>
<feature type="modified residue" description="N6-acetyllysine" evidence="1">
    <location>
        <position position="36"/>
    </location>
</feature>
<feature type="modified residue" description="Phosphoserine" evidence="17 26">
    <location>
        <position position="107"/>
    </location>
</feature>
<feature type="modified residue" description="Phosphothreonine" evidence="18 26">
    <location>
        <position position="238"/>
    </location>
</feature>
<feature type="modified residue" description="N6-acetyllysine" evidence="21">
    <location>
        <position position="247"/>
    </location>
</feature>
<feature type="modified residue" description="Phosphoserine" evidence="26 27">
    <location>
        <position position="274"/>
    </location>
</feature>
<feature type="splice variant" id="VSP_041265" description="In isoform 2." evidence="7">
    <original>G</original>
    <variation>VTSYKSNR</variation>
    <location>
        <position position="72"/>
    </location>
</feature>
<feature type="sequence variant" id="VAR_085931" description="In PAICSD; uncertain significance; no effect on protein abundance; decreased phosphoribosylaminoimidazole carboxylase activity; decreased phosphoribosylaminoimidazolesuccinocarboxamide synthase activity; dbSNP:rs192831239." evidence="4">
    <original>K</original>
    <variation>R</variation>
    <location>
        <position position="53"/>
    </location>
</feature>
<feature type="sequence variant" id="VAR_051884" description="In dbSNP:rs11549976.">
    <original>K</original>
    <variation>N</variation>
    <location>
        <position position="201"/>
    </location>
</feature>
<feature type="mutagenesis site" description="Loss of phosphoribosylaminoimidazole carboxylase activity." evidence="2">
    <original>H</original>
    <variation>Y</variation>
    <location>
        <position position="303"/>
    </location>
</feature>
<feature type="mutagenesis site" description="Loss of phosphoribosylaminoimidazole carboxylase activity." evidence="2">
    <original>S</original>
    <variation>A</variation>
    <location>
        <position position="332"/>
    </location>
</feature>
<feature type="mutagenesis site" description="Loss of phosphoribosylaminoimidazole carboxylase activity." evidence="2">
    <original>G</original>
    <variation>A</variation>
    <location>
        <position position="334"/>
    </location>
</feature>
<feature type="mutagenesis site" description="No effect on phosphoribosylaminoimidazole carboxylase activity." evidence="2">
    <original>S</original>
    <variation>A</variation>
    <location>
        <position position="400"/>
    </location>
</feature>
<feature type="sequence conflict" description="In Ref. 3; CAH18683." evidence="10" ref="3">
    <original>W</original>
    <variation>R</variation>
    <location>
        <position position="217"/>
    </location>
</feature>
<feature type="sequence conflict" description="In Ref. 3; CAH18683." evidence="10" ref="3">
    <original>S</original>
    <variation>T</variation>
    <location>
        <position position="340"/>
    </location>
</feature>
<feature type="strand" evidence="28">
    <location>
        <begin position="9"/>
        <end position="15"/>
    </location>
</feature>
<feature type="strand" evidence="28">
    <location>
        <begin position="17"/>
        <end position="27"/>
    </location>
</feature>
<feature type="strand" evidence="28">
    <location>
        <begin position="30"/>
        <end position="35"/>
    </location>
</feature>
<feature type="strand" evidence="28">
    <location>
        <begin position="37"/>
        <end position="41"/>
    </location>
</feature>
<feature type="turn" evidence="28">
    <location>
        <begin position="42"/>
        <end position="45"/>
    </location>
</feature>
<feature type="strand" evidence="28">
    <location>
        <begin position="46"/>
        <end position="49"/>
    </location>
</feature>
<feature type="helix" evidence="28">
    <location>
        <begin position="53"/>
        <end position="71"/>
    </location>
</feature>
<feature type="strand" evidence="28">
    <location>
        <begin position="82"/>
        <end position="89"/>
    </location>
</feature>
<feature type="strand" evidence="28">
    <location>
        <begin position="91"/>
        <end position="93"/>
    </location>
</feature>
<feature type="strand" evidence="28">
    <location>
        <begin position="96"/>
        <end position="103"/>
    </location>
</feature>
<feature type="helix" evidence="28">
    <location>
        <begin position="107"/>
        <end position="111"/>
    </location>
</feature>
<feature type="strand" evidence="28">
    <location>
        <begin position="120"/>
        <end position="130"/>
    </location>
</feature>
<feature type="turn" evidence="28">
    <location>
        <begin position="133"/>
        <end position="136"/>
    </location>
</feature>
<feature type="helix" evidence="28">
    <location>
        <begin position="142"/>
        <end position="147"/>
    </location>
</feature>
<feature type="helix" evidence="28">
    <location>
        <begin position="159"/>
        <end position="180"/>
    </location>
</feature>
<feature type="helix" evidence="28">
    <location>
        <begin position="181"/>
        <end position="183"/>
    </location>
</feature>
<feature type="strand" evidence="28">
    <location>
        <begin position="185"/>
        <end position="197"/>
    </location>
</feature>
<feature type="turn" evidence="28">
    <location>
        <begin position="198"/>
        <end position="200"/>
    </location>
</feature>
<feature type="strand" evidence="28">
    <location>
        <begin position="203"/>
        <end position="207"/>
    </location>
</feature>
<feature type="strand" evidence="28">
    <location>
        <begin position="213"/>
        <end position="218"/>
    </location>
</feature>
<feature type="helix" evidence="28">
    <location>
        <begin position="222"/>
        <end position="224"/>
    </location>
</feature>
<feature type="helix" evidence="28">
    <location>
        <begin position="229"/>
        <end position="232"/>
    </location>
</feature>
<feature type="helix" evidence="28">
    <location>
        <begin position="239"/>
        <end position="255"/>
    </location>
</feature>
<feature type="helix" evidence="28">
    <location>
        <begin position="256"/>
        <end position="260"/>
    </location>
</feature>
<feature type="strand" evidence="28">
    <location>
        <begin position="267"/>
        <end position="273"/>
    </location>
</feature>
<feature type="helix" evidence="28">
    <location>
        <begin position="275"/>
        <end position="277"/>
    </location>
</feature>
<feature type="helix" evidence="28">
    <location>
        <begin position="278"/>
        <end position="289"/>
    </location>
</feature>
<feature type="turn" evidence="28">
    <location>
        <begin position="290"/>
        <end position="292"/>
    </location>
</feature>
<feature type="strand" evidence="28">
    <location>
        <begin position="295"/>
        <end position="299"/>
    </location>
</feature>
<feature type="turn" evidence="28">
    <location>
        <begin position="302"/>
        <end position="304"/>
    </location>
</feature>
<feature type="helix" evidence="28">
    <location>
        <begin position="306"/>
        <end position="317"/>
    </location>
</feature>
<feature type="strand" evidence="28">
    <location>
        <begin position="318"/>
        <end position="320"/>
    </location>
</feature>
<feature type="strand" evidence="28">
    <location>
        <begin position="323"/>
        <end position="328"/>
    </location>
</feature>
<feature type="helix" evidence="28">
    <location>
        <begin position="335"/>
        <end position="342"/>
    </location>
</feature>
<feature type="strand" evidence="28">
    <location>
        <begin position="347"/>
        <end position="349"/>
    </location>
</feature>
<feature type="turn" evidence="28">
    <location>
        <begin position="355"/>
        <end position="357"/>
    </location>
</feature>
<feature type="helix" evidence="28">
    <location>
        <begin position="358"/>
        <end position="361"/>
    </location>
</feature>
<feature type="helix" evidence="28">
    <location>
        <begin position="363"/>
        <end position="366"/>
    </location>
</feature>
<feature type="helix" evidence="28">
    <location>
        <begin position="380"/>
        <end position="392"/>
    </location>
</feature>
<feature type="helix" evidence="28">
    <location>
        <begin position="396"/>
        <end position="420"/>
    </location>
</feature>
<feature type="helix" evidence="28">
    <location>
        <begin position="421"/>
        <end position="424"/>
    </location>
</feature>
<comment type="function">
    <text evidence="2 3 4">Bifunctional phosphoribosylaminoimidazole carboxylase and phosphoribosylaminoimidazole succinocarboxamide synthetase catalyzing two reactions of the de novo purine biosynthetic pathway.</text>
</comment>
<comment type="catalytic activity">
    <reaction evidence="2">
        <text>5-amino-1-(5-phospho-D-ribosyl)imidazole-4-carboxylate + L-aspartate + ATP = (2S)-2-[5-amino-1-(5-phospho-beta-D-ribosyl)imidazole-4-carboxamido]succinate + ADP + phosphate + 2 H(+)</text>
        <dbReference type="Rhea" id="RHEA:22628"/>
        <dbReference type="ChEBI" id="CHEBI:15378"/>
        <dbReference type="ChEBI" id="CHEBI:29991"/>
        <dbReference type="ChEBI" id="CHEBI:30616"/>
        <dbReference type="ChEBI" id="CHEBI:43474"/>
        <dbReference type="ChEBI" id="CHEBI:58443"/>
        <dbReference type="ChEBI" id="CHEBI:77657"/>
        <dbReference type="ChEBI" id="CHEBI:456216"/>
        <dbReference type="EC" id="6.3.2.6"/>
    </reaction>
    <physiologicalReaction direction="left-to-right" evidence="4">
        <dbReference type="Rhea" id="RHEA:22629"/>
    </physiologicalReaction>
</comment>
<comment type="catalytic activity">
    <reaction evidence="2 4">
        <text>5-amino-1-(5-phospho-D-ribosyl)imidazole-4-carboxylate + H(+) = 5-amino-1-(5-phospho-beta-D-ribosyl)imidazole + CO2</text>
        <dbReference type="Rhea" id="RHEA:10792"/>
        <dbReference type="ChEBI" id="CHEBI:15378"/>
        <dbReference type="ChEBI" id="CHEBI:16526"/>
        <dbReference type="ChEBI" id="CHEBI:77657"/>
        <dbReference type="ChEBI" id="CHEBI:137981"/>
        <dbReference type="EC" id="4.1.1.21"/>
    </reaction>
    <physiologicalReaction direction="right-to-left" evidence="4">
        <dbReference type="Rhea" id="RHEA:10794"/>
    </physiologicalReaction>
</comment>
<comment type="pathway">
    <text evidence="12">Purine metabolism; IMP biosynthesis via de novo pathway; 5-amino-1-(5-phospho-D-ribosyl)imidazole-4-carboxamide from 5-amino-1-(5-phospho-D-ribosyl)imidazole-4-carboxylate: step 1/2.</text>
</comment>
<comment type="pathway">
    <text evidence="12">Purine metabolism; IMP biosynthesis via de novo pathway; 5-amino-1-(5-phospho-D-ribosyl)imidazole-4-carboxylate from 5-amino-1-(5-phospho-D-ribosyl)imidazole (carboxylase route): step 1/1.</text>
</comment>
<comment type="subunit">
    <text evidence="2">Homooctamer.</text>
</comment>
<comment type="interaction">
    <interactant intactId="EBI-712261">
        <id>P22234</id>
    </interactant>
    <interactant intactId="EBI-295634">
        <id>Q16543</id>
        <label>CDC37</label>
    </interactant>
    <organismsDiffer>false</organismsDiffer>
    <experiments>3</experiments>
</comment>
<comment type="interaction">
    <interactant intactId="EBI-712261">
        <id>P22234</id>
    </interactant>
    <interactant intactId="EBI-740459">
        <id>P51116</id>
        <label>FXR2</label>
    </interactant>
    <organismsDiffer>false</organismsDiffer>
    <experiments>4</experiments>
</comment>
<comment type="interaction">
    <interactant intactId="EBI-712261">
        <id>P22234</id>
    </interactant>
    <interactant intactId="EBI-739909">
        <id>Q969R5</id>
        <label>L3MBTL2</label>
    </interactant>
    <organismsDiffer>false</organismsDiffer>
    <experiments>6</experiments>
</comment>
<comment type="interaction">
    <interactant intactId="EBI-712261">
        <id>P22234</id>
    </interactant>
    <interactant intactId="EBI-739832">
        <id>Q8TBB1</id>
        <label>LNX1</label>
    </interactant>
    <organismsDiffer>false</organismsDiffer>
    <experiments>4</experiments>
</comment>
<comment type="interaction">
    <interactant intactId="EBI-712261">
        <id>P22234</id>
    </interactant>
    <interactant intactId="EBI-740486">
        <id>Q6ZVK8</id>
        <label>NUDT18</label>
    </interactant>
    <organismsDiffer>false</organismsDiffer>
    <experiments>3</experiments>
</comment>
<comment type="interaction">
    <interactant intactId="EBI-712261">
        <id>P22234</id>
    </interactant>
    <interactant intactId="EBI-712261">
        <id>P22234</id>
        <label>PAICS</label>
    </interactant>
    <organismsDiffer>false</organismsDiffer>
    <experiments>7</experiments>
</comment>
<comment type="interaction">
    <interactant intactId="EBI-712261">
        <id>P22234</id>
    </interactant>
    <interactant intactId="EBI-348567">
        <id>O75928-2</id>
        <label>PIAS2</label>
    </interactant>
    <organismsDiffer>false</organismsDiffer>
    <experiments>3</experiments>
</comment>
<comment type="interaction">
    <interactant intactId="EBI-712261">
        <id>P22234</id>
    </interactant>
    <interactant intactId="EBI-12117156">
        <id>C9JJ79</id>
        <label>PILRA</label>
    </interactant>
    <organismsDiffer>false</organismsDiffer>
    <experiments>3</experiments>
</comment>
<comment type="interaction">
    <interactant intactId="EBI-712261">
        <id>P22234</id>
    </interactant>
    <interactant intactId="EBI-948156">
        <id>Q9Y4B4</id>
        <label>RAD54L2</label>
    </interactant>
    <organismsDiffer>false</organismsDiffer>
    <experiments>3</experiments>
</comment>
<comment type="interaction">
    <interactant intactId="EBI-712261">
        <id>P22234</id>
    </interactant>
    <interactant intactId="EBI-2340927">
        <id>P78317</id>
        <label>RNF4</label>
    </interactant>
    <organismsDiffer>false</organismsDiffer>
    <experiments>3</experiments>
</comment>
<comment type="interaction">
    <interactant intactId="EBI-712261">
        <id>P22234</id>
    </interactant>
    <interactant intactId="EBI-10180829">
        <id>Q7KZS0</id>
        <label>UBE2I</label>
    </interactant>
    <organismsDiffer>false</organismsDiffer>
    <experiments>3</experiments>
</comment>
<comment type="interaction">
    <interactant intactId="EBI-712261">
        <id>P22234</id>
    </interactant>
    <interactant intactId="EBI-2797576">
        <id>Q9UBW7</id>
        <label>ZMYM2</label>
    </interactant>
    <organismsDiffer>false</organismsDiffer>
    <experiments>3</experiments>
</comment>
<comment type="alternative products">
    <event type="alternative splicing"/>
    <isoform>
        <id>P22234-1</id>
        <name>1</name>
        <sequence type="displayed"/>
    </isoform>
    <isoform>
        <id>P22234-2</id>
        <name>2</name>
        <sequence type="described" ref="VSP_041265"/>
    </isoform>
</comment>
<comment type="disease" evidence="4">
    <disease id="DI-06408">
        <name>Phosphoribosylaminoimidazole carboxylase deficiency</name>
        <acronym>PAICSD</acronym>
        <description>An autosomal recessive inborn error of purine metabolism, clinically characterized by multiple congenital anomalies and early neonatal death.</description>
        <dbReference type="MIM" id="619859"/>
    </disease>
    <text>The disease is caused by variants affecting the gene represented in this entry.</text>
</comment>
<comment type="similarity">
    <text evidence="10">In the N-terminal section; belongs to the SAICAR synthetase family.</text>
</comment>
<comment type="similarity">
    <text evidence="10">In the C-terminal section; belongs to the AIR carboxylase family. Class II subfamily.</text>
</comment>
<evidence type="ECO:0000250" key="1">
    <source>
        <dbReference type="UniProtKB" id="Q9DCL9"/>
    </source>
</evidence>
<evidence type="ECO:0000269" key="2">
    <source>
    </source>
</evidence>
<evidence type="ECO:0000269" key="3">
    <source>
    </source>
</evidence>
<evidence type="ECO:0000269" key="4">
    <source>
    </source>
</evidence>
<evidence type="ECO:0000269" key="5">
    <source ref="6"/>
</evidence>
<evidence type="ECO:0000303" key="6">
    <source>
    </source>
</evidence>
<evidence type="ECO:0000303" key="7">
    <source>
    </source>
</evidence>
<evidence type="ECO:0000303" key="8">
    <source>
    </source>
</evidence>
<evidence type="ECO:0000303" key="9">
    <source>
    </source>
</evidence>
<evidence type="ECO:0000305" key="10"/>
<evidence type="ECO:0000305" key="11">
    <source>
    </source>
</evidence>
<evidence type="ECO:0000305" key="12">
    <source>
    </source>
</evidence>
<evidence type="ECO:0000312" key="13">
    <source>
        <dbReference type="HGNC" id="HGNC:8587"/>
    </source>
</evidence>
<evidence type="ECO:0007744" key="14">
    <source>
        <dbReference type="PDB" id="2H31"/>
    </source>
</evidence>
<evidence type="ECO:0007744" key="15">
    <source>
    </source>
</evidence>
<evidence type="ECO:0007744" key="16">
    <source>
    </source>
</evidence>
<evidence type="ECO:0007744" key="17">
    <source>
    </source>
</evidence>
<evidence type="ECO:0007744" key="18">
    <source>
    </source>
</evidence>
<evidence type="ECO:0007744" key="19">
    <source>
    </source>
</evidence>
<evidence type="ECO:0007744" key="20">
    <source>
    </source>
</evidence>
<evidence type="ECO:0007744" key="21">
    <source>
    </source>
</evidence>
<evidence type="ECO:0007744" key="22">
    <source>
    </source>
</evidence>
<evidence type="ECO:0007744" key="23">
    <source>
    </source>
</evidence>
<evidence type="ECO:0007744" key="24">
    <source>
    </source>
</evidence>
<evidence type="ECO:0007744" key="25">
    <source>
    </source>
</evidence>
<evidence type="ECO:0007744" key="26">
    <source>
    </source>
</evidence>
<evidence type="ECO:0007744" key="27">
    <source>
    </source>
</evidence>
<evidence type="ECO:0007829" key="28">
    <source>
        <dbReference type="PDB" id="6YB8"/>
    </source>
</evidence>
<proteinExistence type="evidence at protein level"/>
<dbReference type="EC" id="4.1.1.21" evidence="2 4"/>
<dbReference type="EC" id="6.3.2.6" evidence="4"/>
<dbReference type="EMBL" id="X53793">
    <property type="protein sequence ID" value="CAA37801.1"/>
    <property type="molecule type" value="mRNA"/>
</dbReference>
<dbReference type="EMBL" id="BT006988">
    <property type="protein sequence ID" value="AAP35634.1"/>
    <property type="molecule type" value="mRNA"/>
</dbReference>
<dbReference type="EMBL" id="CR749824">
    <property type="protein sequence ID" value="CAH18683.1"/>
    <property type="molecule type" value="mRNA"/>
</dbReference>
<dbReference type="EMBL" id="AC068620">
    <property type="status" value="NOT_ANNOTATED_CDS"/>
    <property type="molecule type" value="Genomic_DNA"/>
</dbReference>
<dbReference type="EMBL" id="AC114766">
    <property type="status" value="NOT_ANNOTATED_CDS"/>
    <property type="molecule type" value="Genomic_DNA"/>
</dbReference>
<dbReference type="EMBL" id="BC010273">
    <property type="protein sequence ID" value="AAH10273.1"/>
    <property type="molecule type" value="mRNA"/>
</dbReference>
<dbReference type="EMBL" id="BC019255">
    <property type="protein sequence ID" value="AAH19255.1"/>
    <property type="molecule type" value="mRNA"/>
</dbReference>
<dbReference type="CCDS" id="CCDS47060.1">
    <molecule id="P22234-2"/>
</dbReference>
<dbReference type="CCDS" id="CCDS47061.1">
    <molecule id="P22234-1"/>
</dbReference>
<dbReference type="PIR" id="S14147">
    <property type="entry name" value="S14147"/>
</dbReference>
<dbReference type="RefSeq" id="NP_001072992.1">
    <molecule id="P22234-1"/>
    <property type="nucleotide sequence ID" value="NM_001079524.2"/>
</dbReference>
<dbReference type="RefSeq" id="NP_001072993.1">
    <molecule id="P22234-2"/>
    <property type="nucleotide sequence ID" value="NM_001079525.2"/>
</dbReference>
<dbReference type="RefSeq" id="NP_006443.1">
    <molecule id="P22234-1"/>
    <property type="nucleotide sequence ID" value="NM_006452.4"/>
</dbReference>
<dbReference type="RefSeq" id="XP_047305485.1">
    <molecule id="P22234-1"/>
    <property type="nucleotide sequence ID" value="XM_047449529.1"/>
</dbReference>
<dbReference type="RefSeq" id="XP_054204751.1">
    <molecule id="P22234-1"/>
    <property type="nucleotide sequence ID" value="XM_054348776.1"/>
</dbReference>
<dbReference type="PDB" id="2H31">
    <property type="method" value="X-ray"/>
    <property type="resolution" value="2.80 A"/>
    <property type="chains" value="A=1-425"/>
</dbReference>
<dbReference type="PDB" id="6YB8">
    <property type="method" value="X-ray"/>
    <property type="resolution" value="2.36 A"/>
    <property type="chains" value="A/B=1-425"/>
</dbReference>
<dbReference type="PDB" id="6YB9">
    <property type="method" value="X-ray"/>
    <property type="resolution" value="2.41 A"/>
    <property type="chains" value="A/B=1-425"/>
</dbReference>
<dbReference type="PDB" id="7ALE">
    <property type="method" value="X-ray"/>
    <property type="resolution" value="2.95 A"/>
    <property type="chains" value="A/B=1-425"/>
</dbReference>
<dbReference type="PDBsum" id="2H31"/>
<dbReference type="PDBsum" id="6YB8"/>
<dbReference type="PDBsum" id="6YB9"/>
<dbReference type="PDBsum" id="7ALE"/>
<dbReference type="SMR" id="P22234"/>
<dbReference type="BioGRID" id="115852">
    <property type="interactions" value="354"/>
</dbReference>
<dbReference type="FunCoup" id="P22234">
    <property type="interactions" value="1654"/>
</dbReference>
<dbReference type="IntAct" id="P22234">
    <property type="interactions" value="95"/>
</dbReference>
<dbReference type="MINT" id="P22234"/>
<dbReference type="STRING" id="9606.ENSP00000382595"/>
<dbReference type="BindingDB" id="P22234"/>
<dbReference type="ChEMBL" id="CHEMBL5922"/>
<dbReference type="DrugBank" id="DB00128">
    <property type="generic name" value="Aspartic acid"/>
</dbReference>
<dbReference type="DrugCentral" id="P22234"/>
<dbReference type="GlyGen" id="P22234">
    <property type="glycosylation" value="1 site, 1 O-linked glycan (1 site)"/>
</dbReference>
<dbReference type="iPTMnet" id="P22234"/>
<dbReference type="MetOSite" id="P22234"/>
<dbReference type="PhosphoSitePlus" id="P22234"/>
<dbReference type="SwissPalm" id="P22234"/>
<dbReference type="BioMuta" id="PAICS"/>
<dbReference type="DMDM" id="131628"/>
<dbReference type="jPOST" id="P22234"/>
<dbReference type="MassIVE" id="P22234"/>
<dbReference type="PaxDb" id="9606-ENSP00000382595"/>
<dbReference type="PeptideAtlas" id="P22234"/>
<dbReference type="ProteomicsDB" id="53968">
    <molecule id="P22234-1"/>
</dbReference>
<dbReference type="ProteomicsDB" id="53969">
    <molecule id="P22234-2"/>
</dbReference>
<dbReference type="Pumba" id="P22234"/>
<dbReference type="Antibodypedia" id="24027">
    <property type="antibodies" value="347 antibodies from 31 providers"/>
</dbReference>
<dbReference type="DNASU" id="10606"/>
<dbReference type="Ensembl" id="ENST00000264221.6">
    <molecule id="P22234-1"/>
    <property type="protein sequence ID" value="ENSP00000264221.2"/>
    <property type="gene ID" value="ENSG00000128050.9"/>
</dbReference>
<dbReference type="Ensembl" id="ENST00000399688.7">
    <molecule id="P22234-2"/>
    <property type="protein sequence ID" value="ENSP00000382595.3"/>
    <property type="gene ID" value="ENSG00000128050.9"/>
</dbReference>
<dbReference type="Ensembl" id="ENST00000512576.3">
    <molecule id="P22234-1"/>
    <property type="protein sequence ID" value="ENSP00000421096.1"/>
    <property type="gene ID" value="ENSG00000128050.9"/>
</dbReference>
<dbReference type="GeneID" id="10606"/>
<dbReference type="KEGG" id="hsa:10606"/>
<dbReference type="MANE-Select" id="ENST00000512576.3">
    <property type="protein sequence ID" value="ENSP00000421096.1"/>
    <property type="RefSeq nucleotide sequence ID" value="NM_001079524.2"/>
    <property type="RefSeq protein sequence ID" value="NP_001072992.1"/>
</dbReference>
<dbReference type="UCSC" id="uc003hbs.1">
    <molecule id="P22234-1"/>
    <property type="organism name" value="human"/>
</dbReference>
<dbReference type="AGR" id="HGNC:8587"/>
<dbReference type="CTD" id="10606"/>
<dbReference type="DisGeNET" id="10606"/>
<dbReference type="GeneCards" id="PAICS"/>
<dbReference type="HGNC" id="HGNC:8587">
    <property type="gene designation" value="PAICS"/>
</dbReference>
<dbReference type="HPA" id="ENSG00000128050">
    <property type="expression patterns" value="Low tissue specificity"/>
</dbReference>
<dbReference type="MalaCards" id="PAICS"/>
<dbReference type="MIM" id="172439">
    <property type="type" value="gene"/>
</dbReference>
<dbReference type="MIM" id="619859">
    <property type="type" value="phenotype"/>
</dbReference>
<dbReference type="neXtProt" id="NX_P22234"/>
<dbReference type="OpenTargets" id="ENSG00000128050"/>
<dbReference type="PharmGKB" id="PA32914"/>
<dbReference type="VEuPathDB" id="HostDB:ENSG00000128050"/>
<dbReference type="eggNOG" id="KOG2835">
    <property type="taxonomic scope" value="Eukaryota"/>
</dbReference>
<dbReference type="GeneTree" id="ENSGT00390000010172"/>
<dbReference type="InParanoid" id="P22234"/>
<dbReference type="OMA" id="ILAMSDH"/>
<dbReference type="OrthoDB" id="9991235at2759"/>
<dbReference type="PAN-GO" id="P22234">
    <property type="GO annotations" value="3 GO annotations based on evolutionary models"/>
</dbReference>
<dbReference type="PhylomeDB" id="P22234"/>
<dbReference type="TreeFam" id="TF106384"/>
<dbReference type="BioCyc" id="MetaCyc:HS05155-MONOMER"/>
<dbReference type="PathwayCommons" id="P22234"/>
<dbReference type="Reactome" id="R-HSA-73817">
    <property type="pathway name" value="Purine ribonucleoside monophosphate biosynthesis"/>
</dbReference>
<dbReference type="SignaLink" id="P22234"/>
<dbReference type="SIGNOR" id="P22234"/>
<dbReference type="UniPathway" id="UPA00074">
    <property type="reaction ID" value="UER00130"/>
</dbReference>
<dbReference type="UniPathway" id="UPA00074">
    <property type="reaction ID" value="UER00131"/>
</dbReference>
<dbReference type="BioGRID-ORCS" id="10606">
    <property type="hits" value="255 hits in 1125 CRISPR screens"/>
</dbReference>
<dbReference type="CD-CODE" id="FB4E32DD">
    <property type="entry name" value="Presynaptic clusters and postsynaptic densities"/>
</dbReference>
<dbReference type="ChiTaRS" id="PAICS">
    <property type="organism name" value="human"/>
</dbReference>
<dbReference type="EvolutionaryTrace" id="P22234"/>
<dbReference type="GenomeRNAi" id="10606"/>
<dbReference type="Pharos" id="P22234">
    <property type="development level" value="Tchem"/>
</dbReference>
<dbReference type="PRO" id="PR:P22234"/>
<dbReference type="Proteomes" id="UP000005640">
    <property type="component" value="Chromosome 4"/>
</dbReference>
<dbReference type="RNAct" id="P22234">
    <property type="molecule type" value="protein"/>
</dbReference>
<dbReference type="Bgee" id="ENSG00000128050">
    <property type="expression patterns" value="Expressed in ventricular zone and 206 other cell types or tissues"/>
</dbReference>
<dbReference type="ExpressionAtlas" id="P22234">
    <property type="expression patterns" value="baseline and differential"/>
</dbReference>
<dbReference type="GO" id="GO:0005737">
    <property type="term" value="C:cytoplasm"/>
    <property type="evidence" value="ECO:0000314"/>
    <property type="project" value="BHF-UCL"/>
</dbReference>
<dbReference type="GO" id="GO:0005829">
    <property type="term" value="C:cytosol"/>
    <property type="evidence" value="ECO:0000304"/>
    <property type="project" value="Reactome"/>
</dbReference>
<dbReference type="GO" id="GO:0070062">
    <property type="term" value="C:extracellular exosome"/>
    <property type="evidence" value="ECO:0007005"/>
    <property type="project" value="UniProtKB"/>
</dbReference>
<dbReference type="GO" id="GO:0016020">
    <property type="term" value="C:membrane"/>
    <property type="evidence" value="ECO:0007005"/>
    <property type="project" value="UniProtKB"/>
</dbReference>
<dbReference type="GO" id="GO:0005524">
    <property type="term" value="F:ATP binding"/>
    <property type="evidence" value="ECO:0007669"/>
    <property type="project" value="UniProtKB-KW"/>
</dbReference>
<dbReference type="GO" id="GO:0045296">
    <property type="term" value="F:cadherin binding"/>
    <property type="evidence" value="ECO:0007005"/>
    <property type="project" value="BHF-UCL"/>
</dbReference>
<dbReference type="GO" id="GO:0042802">
    <property type="term" value="F:identical protein binding"/>
    <property type="evidence" value="ECO:0000353"/>
    <property type="project" value="IntAct"/>
</dbReference>
<dbReference type="GO" id="GO:0004638">
    <property type="term" value="F:phosphoribosylaminoimidazole carboxylase activity"/>
    <property type="evidence" value="ECO:0000314"/>
    <property type="project" value="MGI"/>
</dbReference>
<dbReference type="GO" id="GO:0004639">
    <property type="term" value="F:phosphoribosylaminoimidazolesuccinocarboxamide synthase activity"/>
    <property type="evidence" value="ECO:0000314"/>
    <property type="project" value="MGI"/>
</dbReference>
<dbReference type="GO" id="GO:0044208">
    <property type="term" value="P:'de novo' AMP biosynthetic process"/>
    <property type="evidence" value="ECO:0000314"/>
    <property type="project" value="MGI"/>
</dbReference>
<dbReference type="GO" id="GO:0006189">
    <property type="term" value="P:'de novo' IMP biosynthetic process"/>
    <property type="evidence" value="ECO:0000314"/>
    <property type="project" value="MGI"/>
</dbReference>
<dbReference type="GO" id="GO:0097294">
    <property type="term" value="P:'de novo' XMP biosynthetic process"/>
    <property type="evidence" value="ECO:0000314"/>
    <property type="project" value="MGI"/>
</dbReference>
<dbReference type="GO" id="GO:0006177">
    <property type="term" value="P:GMP biosynthetic process"/>
    <property type="evidence" value="ECO:0000314"/>
    <property type="project" value="MGI"/>
</dbReference>
<dbReference type="GO" id="GO:0009113">
    <property type="term" value="P:purine nucleobase biosynthetic process"/>
    <property type="evidence" value="ECO:0000314"/>
    <property type="project" value="UniProtKB"/>
</dbReference>
<dbReference type="CDD" id="cd01416">
    <property type="entry name" value="SAICAR_synt_Ade5"/>
    <property type="match status" value="1"/>
</dbReference>
<dbReference type="DisProt" id="DP02794"/>
<dbReference type="FunFam" id="3.30.200.20:FF:000183">
    <property type="entry name" value="Probable multifunctional protein ADE2"/>
    <property type="match status" value="1"/>
</dbReference>
<dbReference type="FunFam" id="3.30.470.20:FF:000020">
    <property type="entry name" value="Probable multifunctional protein ADE2"/>
    <property type="match status" value="1"/>
</dbReference>
<dbReference type="FunFam" id="3.40.50.1970:FF:000006">
    <property type="entry name" value="Probable multifunctional protein ADE2"/>
    <property type="match status" value="1"/>
</dbReference>
<dbReference type="Gene3D" id="3.40.50.1970">
    <property type="match status" value="1"/>
</dbReference>
<dbReference type="Gene3D" id="3.30.470.20">
    <property type="entry name" value="ATP-grasp fold, B domain"/>
    <property type="match status" value="1"/>
</dbReference>
<dbReference type="Gene3D" id="3.30.200.20">
    <property type="entry name" value="Phosphorylase Kinase, domain 1"/>
    <property type="match status" value="1"/>
</dbReference>
<dbReference type="HAMAP" id="MF_02045">
    <property type="entry name" value="PurE_classII"/>
    <property type="match status" value="1"/>
</dbReference>
<dbReference type="HAMAP" id="MF_00137">
    <property type="entry name" value="SAICAR_synth"/>
    <property type="match status" value="1"/>
</dbReference>
<dbReference type="InterPro" id="IPR033626">
    <property type="entry name" value="PurE_classII"/>
</dbReference>
<dbReference type="InterPro" id="IPR000031">
    <property type="entry name" value="PurE_dom"/>
</dbReference>
<dbReference type="InterPro" id="IPR028923">
    <property type="entry name" value="SAICAR_synt/ADE2_N"/>
</dbReference>
<dbReference type="InterPro" id="IPR050089">
    <property type="entry name" value="SAICAR_synthetase"/>
</dbReference>
<dbReference type="InterPro" id="IPR018236">
    <property type="entry name" value="SAICAR_synthetase_CS"/>
</dbReference>
<dbReference type="NCBIfam" id="TIGR01162">
    <property type="entry name" value="purE"/>
    <property type="match status" value="1"/>
</dbReference>
<dbReference type="PANTHER" id="PTHR43599:SF11">
    <property type="entry name" value="BIFUNCTIONAL PHOSPHORIBOSYLAMINOIMIDAZOLE CARBOXYLASE_PHOSPHORIBOSYLAMINOIMIDAZOLE SUCCINOCARBOXAMIDE SYNTHETASE"/>
    <property type="match status" value="1"/>
</dbReference>
<dbReference type="PANTHER" id="PTHR43599">
    <property type="entry name" value="MULTIFUNCTIONAL PROTEIN ADE2"/>
    <property type="match status" value="1"/>
</dbReference>
<dbReference type="Pfam" id="PF00731">
    <property type="entry name" value="AIRC"/>
    <property type="match status" value="1"/>
</dbReference>
<dbReference type="Pfam" id="PF01259">
    <property type="entry name" value="SAICAR_synt"/>
    <property type="match status" value="1"/>
</dbReference>
<dbReference type="SMART" id="SM01001">
    <property type="entry name" value="AIRC"/>
    <property type="match status" value="1"/>
</dbReference>
<dbReference type="SUPFAM" id="SSF52255">
    <property type="entry name" value="N5-CAIR mutase (phosphoribosylaminoimidazole carboxylase, PurE)"/>
    <property type="match status" value="1"/>
</dbReference>
<dbReference type="SUPFAM" id="SSF56104">
    <property type="entry name" value="SAICAR synthase-like"/>
    <property type="match status" value="1"/>
</dbReference>
<dbReference type="PROSITE" id="PS01057">
    <property type="entry name" value="SAICAR_SYNTHETASE_1"/>
    <property type="match status" value="1"/>
</dbReference>
<dbReference type="PROSITE" id="PS01058">
    <property type="entry name" value="SAICAR_SYNTHETASE_2"/>
    <property type="match status" value="1"/>
</dbReference>
<accession>P22234</accession>
<accession>E9PDH9</accession>
<accession>Q68CQ5</accession>
<keyword id="KW-0002">3D-structure</keyword>
<keyword id="KW-0007">Acetylation</keyword>
<keyword id="KW-0025">Alternative splicing</keyword>
<keyword id="KW-0067">ATP-binding</keyword>
<keyword id="KW-0210">Decarboxylase</keyword>
<keyword id="KW-0903">Direct protein sequencing</keyword>
<keyword id="KW-0225">Disease variant</keyword>
<keyword id="KW-0436">Ligase</keyword>
<keyword id="KW-0456">Lyase</keyword>
<keyword id="KW-0511">Multifunctional enzyme</keyword>
<keyword id="KW-0547">Nucleotide-binding</keyword>
<keyword id="KW-0597">Phosphoprotein</keyword>
<keyword id="KW-1267">Proteomics identification</keyword>
<keyword id="KW-0658">Purine biosynthesis</keyword>
<keyword id="KW-1185">Reference proteome</keyword>
<reference key="1">
    <citation type="journal article" date="1990" name="Curr. Genet.">
        <title>Cloning and sequencing of a human cDNA coding for a multifunctional polypeptide of the purine pathway by complementation of the ade2-101 mutant in Saccharomyces cerevisiae.</title>
        <authorList>
            <person name="Minet M."/>
            <person name="Lacroute F."/>
        </authorList>
    </citation>
    <scope>NUCLEOTIDE SEQUENCE [MRNA] (ISOFORM 1)</scope>
</reference>
<reference key="2">
    <citation type="submission" date="2004-10" db="EMBL/GenBank/DDBJ databases">
        <title>Cloning of human full-length CDSs in BD Creator(TM) system donor vector.</title>
        <authorList>
            <person name="Kalnine N."/>
            <person name="Chen X."/>
            <person name="Rolfs A."/>
            <person name="Halleck A."/>
            <person name="Hines L."/>
            <person name="Eisenstein S."/>
            <person name="Koundinya M."/>
            <person name="Raphael J."/>
            <person name="Moreira D."/>
            <person name="Kelley T."/>
            <person name="LaBaer J."/>
            <person name="Lin Y."/>
            <person name="Phelan M."/>
            <person name="Farmer A."/>
        </authorList>
    </citation>
    <scope>NUCLEOTIDE SEQUENCE [LARGE SCALE MRNA] (ISOFORM 1)</scope>
</reference>
<reference key="3">
    <citation type="journal article" date="2007" name="BMC Genomics">
        <title>The full-ORF clone resource of the German cDNA consortium.</title>
        <authorList>
            <person name="Bechtel S."/>
            <person name="Rosenfelder H."/>
            <person name="Duda A."/>
            <person name="Schmidt C.P."/>
            <person name="Ernst U."/>
            <person name="Wellenreuther R."/>
            <person name="Mehrle A."/>
            <person name="Schuster C."/>
            <person name="Bahr A."/>
            <person name="Bloecker H."/>
            <person name="Heubner D."/>
            <person name="Hoerlein A."/>
            <person name="Michel G."/>
            <person name="Wedler H."/>
            <person name="Koehrer K."/>
            <person name="Ottenwaelder B."/>
            <person name="Poustka A."/>
            <person name="Wiemann S."/>
            <person name="Schupp I."/>
        </authorList>
    </citation>
    <scope>NUCLEOTIDE SEQUENCE [LARGE SCALE MRNA] (ISOFORM 2)</scope>
    <source>
        <tissue>Retina</tissue>
    </source>
</reference>
<reference key="4">
    <citation type="journal article" date="2005" name="Nature">
        <title>Generation and annotation of the DNA sequences of human chromosomes 2 and 4.</title>
        <authorList>
            <person name="Hillier L.W."/>
            <person name="Graves T.A."/>
            <person name="Fulton R.S."/>
            <person name="Fulton L.A."/>
            <person name="Pepin K.H."/>
            <person name="Minx P."/>
            <person name="Wagner-McPherson C."/>
            <person name="Layman D."/>
            <person name="Wylie K."/>
            <person name="Sekhon M."/>
            <person name="Becker M.C."/>
            <person name="Fewell G.A."/>
            <person name="Delehaunty K.D."/>
            <person name="Miner T.L."/>
            <person name="Nash W.E."/>
            <person name="Kremitzki C."/>
            <person name="Oddy L."/>
            <person name="Du H."/>
            <person name="Sun H."/>
            <person name="Bradshaw-Cordum H."/>
            <person name="Ali J."/>
            <person name="Carter J."/>
            <person name="Cordes M."/>
            <person name="Harris A."/>
            <person name="Isak A."/>
            <person name="van Brunt A."/>
            <person name="Nguyen C."/>
            <person name="Du F."/>
            <person name="Courtney L."/>
            <person name="Kalicki J."/>
            <person name="Ozersky P."/>
            <person name="Abbott S."/>
            <person name="Armstrong J."/>
            <person name="Belter E.A."/>
            <person name="Caruso L."/>
            <person name="Cedroni M."/>
            <person name="Cotton M."/>
            <person name="Davidson T."/>
            <person name="Desai A."/>
            <person name="Elliott G."/>
            <person name="Erb T."/>
            <person name="Fronick C."/>
            <person name="Gaige T."/>
            <person name="Haakenson W."/>
            <person name="Haglund K."/>
            <person name="Holmes A."/>
            <person name="Harkins R."/>
            <person name="Kim K."/>
            <person name="Kruchowski S.S."/>
            <person name="Strong C.M."/>
            <person name="Grewal N."/>
            <person name="Goyea E."/>
            <person name="Hou S."/>
            <person name="Levy A."/>
            <person name="Martinka S."/>
            <person name="Mead K."/>
            <person name="McLellan M.D."/>
            <person name="Meyer R."/>
            <person name="Randall-Maher J."/>
            <person name="Tomlinson C."/>
            <person name="Dauphin-Kohlberg S."/>
            <person name="Kozlowicz-Reilly A."/>
            <person name="Shah N."/>
            <person name="Swearengen-Shahid S."/>
            <person name="Snider J."/>
            <person name="Strong J.T."/>
            <person name="Thompson J."/>
            <person name="Yoakum M."/>
            <person name="Leonard S."/>
            <person name="Pearman C."/>
            <person name="Trani L."/>
            <person name="Radionenko M."/>
            <person name="Waligorski J.E."/>
            <person name="Wang C."/>
            <person name="Rock S.M."/>
            <person name="Tin-Wollam A.-M."/>
            <person name="Maupin R."/>
            <person name="Latreille P."/>
            <person name="Wendl M.C."/>
            <person name="Yang S.-P."/>
            <person name="Pohl C."/>
            <person name="Wallis J.W."/>
            <person name="Spieth J."/>
            <person name="Bieri T.A."/>
            <person name="Berkowicz N."/>
            <person name="Nelson J.O."/>
            <person name="Osborne J."/>
            <person name="Ding L."/>
            <person name="Meyer R."/>
            <person name="Sabo A."/>
            <person name="Shotland Y."/>
            <person name="Sinha P."/>
            <person name="Wohldmann P.E."/>
            <person name="Cook L.L."/>
            <person name="Hickenbotham M.T."/>
            <person name="Eldred J."/>
            <person name="Williams D."/>
            <person name="Jones T.A."/>
            <person name="She X."/>
            <person name="Ciccarelli F.D."/>
            <person name="Izaurralde E."/>
            <person name="Taylor J."/>
            <person name="Schmutz J."/>
            <person name="Myers R.M."/>
            <person name="Cox D.R."/>
            <person name="Huang X."/>
            <person name="McPherson J.D."/>
            <person name="Mardis E.R."/>
            <person name="Clifton S.W."/>
            <person name="Warren W.C."/>
            <person name="Chinwalla A.T."/>
            <person name="Eddy S.R."/>
            <person name="Marra M.A."/>
            <person name="Ovcharenko I."/>
            <person name="Furey T.S."/>
            <person name="Miller W."/>
            <person name="Eichler E.E."/>
            <person name="Bork P."/>
            <person name="Suyama M."/>
            <person name="Torrents D."/>
            <person name="Waterston R.H."/>
            <person name="Wilson R.K."/>
        </authorList>
    </citation>
    <scope>NUCLEOTIDE SEQUENCE [LARGE SCALE GENOMIC DNA]</scope>
</reference>
<reference key="5">
    <citation type="journal article" date="2004" name="Genome Res.">
        <title>The status, quality, and expansion of the NIH full-length cDNA project: the Mammalian Gene Collection (MGC).</title>
        <authorList>
            <consortium name="The MGC Project Team"/>
        </authorList>
    </citation>
    <scope>NUCLEOTIDE SEQUENCE [LARGE SCALE MRNA] (ISOFORM 1)</scope>
    <source>
        <tissue>Lung</tissue>
        <tissue>Placenta</tissue>
    </source>
</reference>
<reference key="6">
    <citation type="submission" date="2004-07" db="UniProtKB">
        <authorList>
            <person name="Bienvenut W.V."/>
            <person name="Potts A."/>
            <person name="Brablan J."/>
            <person name="Quadroni M."/>
        </authorList>
    </citation>
    <scope>PROTEIN SEQUENCE OF 2-11</scope>
    <scope>ACETYLATION AT ALA-2</scope>
    <scope>IDENTIFICATION BY MASS SPECTROMETRY</scope>
    <source>
        <tissue>B-cell lymphoma</tissue>
    </source>
</reference>
<reference key="7">
    <citation type="journal article" date="1990" name="Proc. Natl. Acad. Sci. U.S.A.">
        <title>Cloning of three human multifunctional de novo purine biosynthetic genes by functional complementation of yeast mutations.</title>
        <authorList>
            <person name="Schild D."/>
            <person name="Brake A.J."/>
            <person name="Kiefer M.C."/>
            <person name="Young D."/>
            <person name="Barr P.J."/>
        </authorList>
    </citation>
    <scope>IDENTIFICATION</scope>
    <scope>FUNCTION</scope>
</reference>
<reference key="8">
    <citation type="journal article" date="2003" name="Nature">
        <title>Proteomic characterization of the human centrosome by protein correlation profiling.</title>
        <authorList>
            <person name="Andersen J.S."/>
            <person name="Wilkinson C.J."/>
            <person name="Mayor T."/>
            <person name="Mortensen P."/>
            <person name="Nigg E.A."/>
            <person name="Mann M."/>
        </authorList>
    </citation>
    <scope>IDENTIFICATION BY MASS SPECTROMETRY</scope>
    <source>
        <tissue>Lymphoblast</tissue>
    </source>
</reference>
<reference key="9">
    <citation type="journal article" date="2006" name="Nat. Biotechnol.">
        <title>A probability-based approach for high-throughput protein phosphorylation analysis and site localization.</title>
        <authorList>
            <person name="Beausoleil S.A."/>
            <person name="Villen J."/>
            <person name="Gerber S.A."/>
            <person name="Rush J."/>
            <person name="Gygi S.P."/>
        </authorList>
    </citation>
    <scope>PHOSPHORYLATION [LARGE SCALE ANALYSIS] AT SER-27</scope>
    <scope>IDENTIFICATION BY MASS SPECTROMETRY [LARGE SCALE ANALYSIS]</scope>
    <source>
        <tissue>Cervix carcinoma</tissue>
    </source>
</reference>
<reference key="10">
    <citation type="journal article" date="2007" name="J. Proteome Res.">
        <title>Improved titanium dioxide enrichment of phosphopeptides from HeLa cells and high confident phosphopeptide identification by cross-validation of MS/MS and MS/MS/MS spectra.</title>
        <authorList>
            <person name="Yu L.R."/>
            <person name="Zhu Z."/>
            <person name="Chan K.C."/>
            <person name="Issaq H.J."/>
            <person name="Dimitrov D.S."/>
            <person name="Veenstra T.D."/>
        </authorList>
    </citation>
    <scope>PHOSPHORYLATION [LARGE SCALE ANALYSIS] AT SER-27</scope>
    <scope>IDENTIFICATION BY MASS SPECTROMETRY [LARGE SCALE ANALYSIS]</scope>
    <source>
        <tissue>Cervix carcinoma</tissue>
    </source>
</reference>
<reference key="11">
    <citation type="journal article" date="2008" name="Mol. Cell">
        <title>Kinase-selective enrichment enables quantitative phosphoproteomics of the kinome across the cell cycle.</title>
        <authorList>
            <person name="Daub H."/>
            <person name="Olsen J.V."/>
            <person name="Bairlein M."/>
            <person name="Gnad F."/>
            <person name="Oppermann F.S."/>
            <person name="Korner R."/>
            <person name="Greff Z."/>
            <person name="Keri G."/>
            <person name="Stemmann O."/>
            <person name="Mann M."/>
        </authorList>
    </citation>
    <scope>PHOSPHORYLATION [LARGE SCALE ANALYSIS] AT SER-27 AND THR-238</scope>
    <scope>IDENTIFICATION BY MASS SPECTROMETRY [LARGE SCALE ANALYSIS]</scope>
    <source>
        <tissue>Cervix carcinoma</tissue>
    </source>
</reference>
<reference key="12">
    <citation type="journal article" date="2008" name="Proc. Natl. Acad. Sci. U.S.A.">
        <title>A quantitative atlas of mitotic phosphorylation.</title>
        <authorList>
            <person name="Dephoure N."/>
            <person name="Zhou C."/>
            <person name="Villen J."/>
            <person name="Beausoleil S.A."/>
            <person name="Bakalarski C.E."/>
            <person name="Elledge S.J."/>
            <person name="Gygi S.P."/>
        </authorList>
    </citation>
    <scope>PHOSPHORYLATION [LARGE SCALE ANALYSIS] AT SER-27 AND SER-107</scope>
    <scope>IDENTIFICATION BY MASS SPECTROMETRY [LARGE SCALE ANALYSIS]</scope>
    <source>
        <tissue>Cervix carcinoma</tissue>
    </source>
</reference>
<reference key="13">
    <citation type="journal article" date="2009" name="Anal. Chem.">
        <title>Lys-N and trypsin cover complementary parts of the phosphoproteome in a refined SCX-based approach.</title>
        <authorList>
            <person name="Gauci S."/>
            <person name="Helbig A.O."/>
            <person name="Slijper M."/>
            <person name="Krijgsveld J."/>
            <person name="Heck A.J."/>
            <person name="Mohammed S."/>
        </authorList>
    </citation>
    <scope>ACETYLATION [LARGE SCALE ANALYSIS] AT ALA-2</scope>
    <scope>CLEAVAGE OF INITIATOR METHIONINE [LARGE SCALE ANALYSIS]</scope>
    <scope>IDENTIFICATION BY MASS SPECTROMETRY [LARGE SCALE ANALYSIS]</scope>
</reference>
<reference key="14">
    <citation type="journal article" date="2009" name="Mol. Cell. Proteomics">
        <title>Large-scale proteomics analysis of the human kinome.</title>
        <authorList>
            <person name="Oppermann F.S."/>
            <person name="Gnad F."/>
            <person name="Olsen J.V."/>
            <person name="Hornberger R."/>
            <person name="Greff Z."/>
            <person name="Keri G."/>
            <person name="Mann M."/>
            <person name="Daub H."/>
        </authorList>
    </citation>
    <scope>PHOSPHORYLATION [LARGE SCALE ANALYSIS] AT SER-27</scope>
    <scope>IDENTIFICATION BY MASS SPECTROMETRY [LARGE SCALE ANALYSIS]</scope>
</reference>
<reference key="15">
    <citation type="journal article" date="2009" name="Sci. Signal.">
        <title>Quantitative phosphoproteomic analysis of T cell receptor signaling reveals system-wide modulation of protein-protein interactions.</title>
        <authorList>
            <person name="Mayya V."/>
            <person name="Lundgren D.H."/>
            <person name="Hwang S.-I."/>
            <person name="Rezaul K."/>
            <person name="Wu L."/>
            <person name="Eng J.K."/>
            <person name="Rodionov V."/>
            <person name="Han D.K."/>
        </authorList>
    </citation>
    <scope>PHOSPHORYLATION [LARGE SCALE ANALYSIS] AT SER-27</scope>
    <scope>IDENTIFICATION BY MASS SPECTROMETRY [LARGE SCALE ANALYSIS]</scope>
    <source>
        <tissue>Leukemic T-cell</tissue>
    </source>
</reference>
<reference key="16">
    <citation type="journal article" date="2009" name="Science">
        <title>Lysine acetylation targets protein complexes and co-regulates major cellular functions.</title>
        <authorList>
            <person name="Choudhary C."/>
            <person name="Kumar C."/>
            <person name="Gnad F."/>
            <person name="Nielsen M.L."/>
            <person name="Rehman M."/>
            <person name="Walther T.C."/>
            <person name="Olsen J.V."/>
            <person name="Mann M."/>
        </authorList>
    </citation>
    <scope>ACETYLATION [LARGE SCALE ANALYSIS] AT LYS-247</scope>
    <scope>IDENTIFICATION BY MASS SPECTROMETRY [LARGE SCALE ANALYSIS]</scope>
</reference>
<reference key="17">
    <citation type="journal article" date="2010" name="Sci. Signal.">
        <title>Quantitative phosphoproteomics reveals widespread full phosphorylation site occupancy during mitosis.</title>
        <authorList>
            <person name="Olsen J.V."/>
            <person name="Vermeulen M."/>
            <person name="Santamaria A."/>
            <person name="Kumar C."/>
            <person name="Miller M.L."/>
            <person name="Jensen L.J."/>
            <person name="Gnad F."/>
            <person name="Cox J."/>
            <person name="Jensen T.S."/>
            <person name="Nigg E.A."/>
            <person name="Brunak S."/>
            <person name="Mann M."/>
        </authorList>
    </citation>
    <scope>PHOSPHORYLATION [LARGE SCALE ANALYSIS] AT SER-27</scope>
    <scope>IDENTIFICATION BY MASS SPECTROMETRY [LARGE SCALE ANALYSIS]</scope>
    <source>
        <tissue>Cervix carcinoma</tissue>
    </source>
</reference>
<reference key="18">
    <citation type="journal article" date="2011" name="BMC Syst. Biol.">
        <title>Initial characterization of the human central proteome.</title>
        <authorList>
            <person name="Burkard T.R."/>
            <person name="Planyavsky M."/>
            <person name="Kaupe I."/>
            <person name="Breitwieser F.P."/>
            <person name="Buerckstuemmer T."/>
            <person name="Bennett K.L."/>
            <person name="Superti-Furga G."/>
            <person name="Colinge J."/>
        </authorList>
    </citation>
    <scope>IDENTIFICATION BY MASS SPECTROMETRY [LARGE SCALE ANALYSIS]</scope>
</reference>
<reference key="19">
    <citation type="journal article" date="2011" name="Sci. Signal.">
        <title>System-wide temporal characterization of the proteome and phosphoproteome of human embryonic stem cell differentiation.</title>
        <authorList>
            <person name="Rigbolt K.T."/>
            <person name="Prokhorova T.A."/>
            <person name="Akimov V."/>
            <person name="Henningsen J."/>
            <person name="Johansen P.T."/>
            <person name="Kratchmarova I."/>
            <person name="Kassem M."/>
            <person name="Mann M."/>
            <person name="Olsen J.V."/>
            <person name="Blagoev B."/>
        </authorList>
    </citation>
    <scope>PHOSPHORYLATION [LARGE SCALE ANALYSIS] AT SER-27</scope>
    <scope>IDENTIFICATION BY MASS SPECTROMETRY [LARGE SCALE ANALYSIS]</scope>
</reference>
<reference key="20">
    <citation type="journal article" date="2012" name="Mol. Cell. Proteomics">
        <title>Comparative large-scale characterisation of plant vs. mammal proteins reveals similar and idiosyncratic N-alpha acetylation features.</title>
        <authorList>
            <person name="Bienvenut W.V."/>
            <person name="Sumpton D."/>
            <person name="Martinez A."/>
            <person name="Lilla S."/>
            <person name="Espagne C."/>
            <person name="Meinnel T."/>
            <person name="Giglione C."/>
        </authorList>
    </citation>
    <scope>ACETYLATION [LARGE SCALE ANALYSIS] AT ALA-2</scope>
    <scope>CLEAVAGE OF INITIATOR METHIONINE [LARGE SCALE ANALYSIS]</scope>
    <scope>IDENTIFICATION BY MASS SPECTROMETRY [LARGE SCALE ANALYSIS]</scope>
</reference>
<reference key="21">
    <citation type="journal article" date="2013" name="J. Proteome Res.">
        <title>Toward a comprehensive characterization of a human cancer cell phosphoproteome.</title>
        <authorList>
            <person name="Zhou H."/>
            <person name="Di Palma S."/>
            <person name="Preisinger C."/>
            <person name="Peng M."/>
            <person name="Polat A.N."/>
            <person name="Heck A.J."/>
            <person name="Mohammed S."/>
        </authorList>
    </citation>
    <scope>PHOSPHORYLATION [LARGE SCALE ANALYSIS] AT SER-27; SER-107; THR-238 AND SER-274</scope>
    <scope>IDENTIFICATION BY MASS SPECTROMETRY [LARGE SCALE ANALYSIS]</scope>
    <source>
        <tissue>Cervix carcinoma</tissue>
        <tissue>Erythroleukemia</tissue>
    </source>
</reference>
<reference key="22">
    <citation type="journal article" date="2014" name="J. Proteomics">
        <title>An enzyme assisted RP-RPLC approach for in-depth analysis of human liver phosphoproteome.</title>
        <authorList>
            <person name="Bian Y."/>
            <person name="Song C."/>
            <person name="Cheng K."/>
            <person name="Dong M."/>
            <person name="Wang F."/>
            <person name="Huang J."/>
            <person name="Sun D."/>
            <person name="Wang L."/>
            <person name="Ye M."/>
            <person name="Zou H."/>
        </authorList>
    </citation>
    <scope>PHOSPHORYLATION [LARGE SCALE ANALYSIS] AT SER-274</scope>
    <scope>IDENTIFICATION BY MASS SPECTROMETRY [LARGE SCALE ANALYSIS]</scope>
    <source>
        <tissue>Liver</tissue>
    </source>
</reference>
<reference evidence="14" key="23">
    <citation type="journal article" date="2007" name="J. Mol. Biol.">
        <title>Octameric structure of the human bifunctional enzyme PAICS in purine biosynthesis.</title>
        <authorList>
            <person name="Li S.-X."/>
            <person name="Tong Y.-P."/>
            <person name="Xie X.-C."/>
            <person name="Wang Q.-H."/>
            <person name="Zhou H.-N."/>
            <person name="Han Y."/>
            <person name="Zhang Z.-Y."/>
            <person name="Gao W."/>
            <person name="Li S.-G."/>
            <person name="Zhang X.C."/>
            <person name="Bi R.-C."/>
        </authorList>
    </citation>
    <scope>X-RAY CRYSTALLOGRAPHY (2.8 ANGSTROMS) IN COMPLEX WITH CARBON DIOXIDE</scope>
    <scope>FUNCTION</scope>
    <scope>CATALYTIC ACTIVITY</scope>
    <scope>SUBUNIT</scope>
    <scope>REGION</scope>
    <scope>MUTAGENESIS OF HIS-303; SER-332; GLY-334 AND SER-400</scope>
</reference>
<reference key="24">
    <citation type="journal article" date="2019" name="Hum. Mol. Genet.">
        <title>PAICS deficiency, a new defect of de novo purine synthesis resulting in multiple congenital anomalies and fatal outcome.</title>
        <authorList>
            <person name="Pelet A."/>
            <person name="Skopova V."/>
            <person name="Steuerwald U."/>
            <person name="Baresova V."/>
            <person name="Zarhrate M."/>
            <person name="Plaza J.M."/>
            <person name="Hnizda A."/>
            <person name="Krijt M."/>
            <person name="Souckova O."/>
            <person name="Wibrand F."/>
            <person name="Andorsdottir G."/>
            <person name="Joensen F."/>
            <person name="Sedlak D."/>
            <person name="Bleyer A.J."/>
            <person name="Kmoch S."/>
            <person name="Lyonnet S."/>
            <person name="Zikanova M."/>
        </authorList>
    </citation>
    <scope>INVOLVEMENT IN PAICSD</scope>
    <scope>VARIANT PAICSD ARG-53</scope>
    <scope>FUNCTION</scope>
    <scope>CATALYTIC ACTIVITY</scope>
    <scope>PATHWAY</scope>
    <scope>CHARACTERIZATION OF VARIANT PAICSD ARG-53</scope>
</reference>